<organism>
    <name type="scientific">Shewanella sp. (strain MR-4)</name>
    <dbReference type="NCBI Taxonomy" id="60480"/>
    <lineage>
        <taxon>Bacteria</taxon>
        <taxon>Pseudomonadati</taxon>
        <taxon>Pseudomonadota</taxon>
        <taxon>Gammaproteobacteria</taxon>
        <taxon>Alteromonadales</taxon>
        <taxon>Shewanellaceae</taxon>
        <taxon>Shewanella</taxon>
    </lineage>
</organism>
<sequence>MTTKTRFAPSPTGFLHVGGARTALYSWLQARANNGEFVLRIEDTDIERSTQAACDAILEGMNWLGLTWDEGPYYQTKRFDRYNEIIAQMLEQGTAYKCYCSRERIDALREAQAANGEAQKYDGCCRDLPARDTDEPFVVRFKNPIGGSVVFDDHVRGRIEFSNDALDDLIIARTDGVPTYNFCVVVDDWDMGITCVVRGEDHINNTPRQINILKALGAPIPEYAHVSMILGDDGAKLSKRHGAVSVMQYRDDGYLPEALLNYLVRLGWSHGDQEVFSLEEMKQLFKLDDINKAPSAFNTEKLVWLNQHYIKTLDPEYVASHLQWHMDDQKIDTSNGPALSAVVTALAERAKTLKELAASSRYFYEDFAEFDAEQAKKHLRGVALEPLQLVQQKLAALTEWTVEAIHQAIEATATELEVGMGKVGMPLRVAVTGAGQSPGLDITLFLIGKVRSEQRISKAIEFVADRINS</sequence>
<reference key="1">
    <citation type="submission" date="2006-08" db="EMBL/GenBank/DDBJ databases">
        <title>Complete sequence of Shewanella sp. MR-4.</title>
        <authorList>
            <consortium name="US DOE Joint Genome Institute"/>
            <person name="Copeland A."/>
            <person name="Lucas S."/>
            <person name="Lapidus A."/>
            <person name="Barry K."/>
            <person name="Detter J.C."/>
            <person name="Glavina del Rio T."/>
            <person name="Hammon N."/>
            <person name="Israni S."/>
            <person name="Dalin E."/>
            <person name="Tice H."/>
            <person name="Pitluck S."/>
            <person name="Kiss H."/>
            <person name="Brettin T."/>
            <person name="Bruce D."/>
            <person name="Han C."/>
            <person name="Tapia R."/>
            <person name="Gilna P."/>
            <person name="Schmutz J."/>
            <person name="Larimer F."/>
            <person name="Land M."/>
            <person name="Hauser L."/>
            <person name="Kyrpides N."/>
            <person name="Mikhailova N."/>
            <person name="Nealson K."/>
            <person name="Konstantinidis K."/>
            <person name="Klappenbach J."/>
            <person name="Tiedje J."/>
            <person name="Richardson P."/>
        </authorList>
    </citation>
    <scope>NUCLEOTIDE SEQUENCE [LARGE SCALE GENOMIC DNA]</scope>
    <source>
        <strain>MR-4</strain>
    </source>
</reference>
<feature type="chain" id="PRO_1000001962" description="Glutamate--tRNA ligase">
    <location>
        <begin position="1"/>
        <end position="469"/>
    </location>
</feature>
<feature type="short sequence motif" description="'HIGH' region" evidence="1">
    <location>
        <begin position="9"/>
        <end position="19"/>
    </location>
</feature>
<feature type="short sequence motif" description="'KMSKS' region" evidence="1">
    <location>
        <begin position="236"/>
        <end position="240"/>
    </location>
</feature>
<feature type="binding site" evidence="1">
    <location>
        <position position="98"/>
    </location>
    <ligand>
        <name>Zn(2+)</name>
        <dbReference type="ChEBI" id="CHEBI:29105"/>
    </ligand>
</feature>
<feature type="binding site" evidence="1">
    <location>
        <position position="100"/>
    </location>
    <ligand>
        <name>Zn(2+)</name>
        <dbReference type="ChEBI" id="CHEBI:29105"/>
    </ligand>
</feature>
<feature type="binding site" evidence="1">
    <location>
        <position position="125"/>
    </location>
    <ligand>
        <name>Zn(2+)</name>
        <dbReference type="ChEBI" id="CHEBI:29105"/>
    </ligand>
</feature>
<feature type="binding site" evidence="1">
    <location>
        <position position="127"/>
    </location>
    <ligand>
        <name>Zn(2+)</name>
        <dbReference type="ChEBI" id="CHEBI:29105"/>
    </ligand>
</feature>
<feature type="binding site" evidence="1">
    <location>
        <position position="239"/>
    </location>
    <ligand>
        <name>ATP</name>
        <dbReference type="ChEBI" id="CHEBI:30616"/>
    </ligand>
</feature>
<evidence type="ECO:0000255" key="1">
    <source>
        <dbReference type="HAMAP-Rule" id="MF_00022"/>
    </source>
</evidence>
<name>SYE_SHESM</name>
<gene>
    <name evidence="1" type="primary">gltX</name>
    <name type="ordered locus">Shewmr4_1365</name>
</gene>
<accession>Q0HKH4</accession>
<protein>
    <recommendedName>
        <fullName evidence="1">Glutamate--tRNA ligase</fullName>
        <ecNumber evidence="1">6.1.1.17</ecNumber>
    </recommendedName>
    <alternativeName>
        <fullName evidence="1">Glutamyl-tRNA synthetase</fullName>
        <shortName evidence="1">GluRS</shortName>
    </alternativeName>
</protein>
<proteinExistence type="inferred from homology"/>
<keyword id="KW-0030">Aminoacyl-tRNA synthetase</keyword>
<keyword id="KW-0067">ATP-binding</keyword>
<keyword id="KW-0963">Cytoplasm</keyword>
<keyword id="KW-0436">Ligase</keyword>
<keyword id="KW-0479">Metal-binding</keyword>
<keyword id="KW-0547">Nucleotide-binding</keyword>
<keyword id="KW-0648">Protein biosynthesis</keyword>
<keyword id="KW-0862">Zinc</keyword>
<comment type="function">
    <text evidence="1">Catalyzes the attachment of glutamate to tRNA(Glu) in a two-step reaction: glutamate is first activated by ATP to form Glu-AMP and then transferred to the acceptor end of tRNA(Glu).</text>
</comment>
<comment type="catalytic activity">
    <reaction evidence="1">
        <text>tRNA(Glu) + L-glutamate + ATP = L-glutamyl-tRNA(Glu) + AMP + diphosphate</text>
        <dbReference type="Rhea" id="RHEA:23540"/>
        <dbReference type="Rhea" id="RHEA-COMP:9663"/>
        <dbReference type="Rhea" id="RHEA-COMP:9680"/>
        <dbReference type="ChEBI" id="CHEBI:29985"/>
        <dbReference type="ChEBI" id="CHEBI:30616"/>
        <dbReference type="ChEBI" id="CHEBI:33019"/>
        <dbReference type="ChEBI" id="CHEBI:78442"/>
        <dbReference type="ChEBI" id="CHEBI:78520"/>
        <dbReference type="ChEBI" id="CHEBI:456215"/>
        <dbReference type="EC" id="6.1.1.17"/>
    </reaction>
</comment>
<comment type="cofactor">
    <cofactor evidence="1">
        <name>Zn(2+)</name>
        <dbReference type="ChEBI" id="CHEBI:29105"/>
    </cofactor>
    <text evidence="1">Binds 1 zinc ion per subunit.</text>
</comment>
<comment type="subunit">
    <text evidence="1">Monomer.</text>
</comment>
<comment type="subcellular location">
    <subcellularLocation>
        <location evidence="1">Cytoplasm</location>
    </subcellularLocation>
</comment>
<comment type="similarity">
    <text evidence="1">Belongs to the class-I aminoacyl-tRNA synthetase family. Glutamate--tRNA ligase type 1 subfamily.</text>
</comment>
<dbReference type="EC" id="6.1.1.17" evidence="1"/>
<dbReference type="EMBL" id="CP000446">
    <property type="protein sequence ID" value="ABI38443.1"/>
    <property type="molecule type" value="Genomic_DNA"/>
</dbReference>
<dbReference type="RefSeq" id="WP_011622148.1">
    <property type="nucleotide sequence ID" value="NC_008321.1"/>
</dbReference>
<dbReference type="SMR" id="Q0HKH4"/>
<dbReference type="KEGG" id="she:Shewmr4_1365"/>
<dbReference type="HOGENOM" id="CLU_015768_6_0_6"/>
<dbReference type="GO" id="GO:0005829">
    <property type="term" value="C:cytosol"/>
    <property type="evidence" value="ECO:0007669"/>
    <property type="project" value="TreeGrafter"/>
</dbReference>
<dbReference type="GO" id="GO:0005524">
    <property type="term" value="F:ATP binding"/>
    <property type="evidence" value="ECO:0007669"/>
    <property type="project" value="UniProtKB-UniRule"/>
</dbReference>
<dbReference type="GO" id="GO:0004818">
    <property type="term" value="F:glutamate-tRNA ligase activity"/>
    <property type="evidence" value="ECO:0007669"/>
    <property type="project" value="UniProtKB-UniRule"/>
</dbReference>
<dbReference type="GO" id="GO:0000049">
    <property type="term" value="F:tRNA binding"/>
    <property type="evidence" value="ECO:0007669"/>
    <property type="project" value="InterPro"/>
</dbReference>
<dbReference type="GO" id="GO:0008270">
    <property type="term" value="F:zinc ion binding"/>
    <property type="evidence" value="ECO:0007669"/>
    <property type="project" value="UniProtKB-UniRule"/>
</dbReference>
<dbReference type="GO" id="GO:0006424">
    <property type="term" value="P:glutamyl-tRNA aminoacylation"/>
    <property type="evidence" value="ECO:0007669"/>
    <property type="project" value="UniProtKB-UniRule"/>
</dbReference>
<dbReference type="CDD" id="cd00808">
    <property type="entry name" value="GluRS_core"/>
    <property type="match status" value="1"/>
</dbReference>
<dbReference type="FunFam" id="1.10.10.350:FF:000001">
    <property type="entry name" value="Glutamate--tRNA ligase"/>
    <property type="match status" value="1"/>
</dbReference>
<dbReference type="FunFam" id="3.40.50.620:FF:000007">
    <property type="entry name" value="Glutamate--tRNA ligase"/>
    <property type="match status" value="1"/>
</dbReference>
<dbReference type="Gene3D" id="1.10.10.350">
    <property type="match status" value="1"/>
</dbReference>
<dbReference type="Gene3D" id="3.40.50.620">
    <property type="entry name" value="HUPs"/>
    <property type="match status" value="1"/>
</dbReference>
<dbReference type="HAMAP" id="MF_00022">
    <property type="entry name" value="Glu_tRNA_synth_type1"/>
    <property type="match status" value="1"/>
</dbReference>
<dbReference type="InterPro" id="IPR045462">
    <property type="entry name" value="aa-tRNA-synth_I_cd-bd"/>
</dbReference>
<dbReference type="InterPro" id="IPR020751">
    <property type="entry name" value="aa-tRNA-synth_I_codon-bd_sub2"/>
</dbReference>
<dbReference type="InterPro" id="IPR001412">
    <property type="entry name" value="aa-tRNA-synth_I_CS"/>
</dbReference>
<dbReference type="InterPro" id="IPR008925">
    <property type="entry name" value="aa_tRNA-synth_I_cd-bd_sf"/>
</dbReference>
<dbReference type="InterPro" id="IPR004527">
    <property type="entry name" value="Glu-tRNA-ligase_bac/mito"/>
</dbReference>
<dbReference type="InterPro" id="IPR000924">
    <property type="entry name" value="Glu/Gln-tRNA-synth"/>
</dbReference>
<dbReference type="InterPro" id="IPR020058">
    <property type="entry name" value="Glu/Gln-tRNA-synth_Ib_cat-dom"/>
</dbReference>
<dbReference type="InterPro" id="IPR049940">
    <property type="entry name" value="GluQ/Sye"/>
</dbReference>
<dbReference type="InterPro" id="IPR033910">
    <property type="entry name" value="GluRS_core"/>
</dbReference>
<dbReference type="InterPro" id="IPR014729">
    <property type="entry name" value="Rossmann-like_a/b/a_fold"/>
</dbReference>
<dbReference type="NCBIfam" id="TIGR00464">
    <property type="entry name" value="gltX_bact"/>
    <property type="match status" value="1"/>
</dbReference>
<dbReference type="PANTHER" id="PTHR43311">
    <property type="entry name" value="GLUTAMATE--TRNA LIGASE"/>
    <property type="match status" value="1"/>
</dbReference>
<dbReference type="PANTHER" id="PTHR43311:SF2">
    <property type="entry name" value="GLUTAMATE--TRNA LIGASE, MITOCHONDRIAL-RELATED"/>
    <property type="match status" value="1"/>
</dbReference>
<dbReference type="Pfam" id="PF19269">
    <property type="entry name" value="Anticodon_2"/>
    <property type="match status" value="1"/>
</dbReference>
<dbReference type="Pfam" id="PF00749">
    <property type="entry name" value="tRNA-synt_1c"/>
    <property type="match status" value="1"/>
</dbReference>
<dbReference type="PRINTS" id="PR00987">
    <property type="entry name" value="TRNASYNTHGLU"/>
</dbReference>
<dbReference type="SUPFAM" id="SSF48163">
    <property type="entry name" value="An anticodon-binding domain of class I aminoacyl-tRNA synthetases"/>
    <property type="match status" value="1"/>
</dbReference>
<dbReference type="SUPFAM" id="SSF52374">
    <property type="entry name" value="Nucleotidylyl transferase"/>
    <property type="match status" value="1"/>
</dbReference>
<dbReference type="PROSITE" id="PS00178">
    <property type="entry name" value="AA_TRNA_LIGASE_I"/>
    <property type="match status" value="1"/>
</dbReference>